<organism>
    <name type="scientific">Aspergillus calidoustus</name>
    <dbReference type="NCBI Taxonomy" id="454130"/>
    <lineage>
        <taxon>Eukaryota</taxon>
        <taxon>Fungi</taxon>
        <taxon>Dikarya</taxon>
        <taxon>Ascomycota</taxon>
        <taxon>Pezizomycotina</taxon>
        <taxon>Eurotiomycetes</taxon>
        <taxon>Eurotiomycetidae</taxon>
        <taxon>Eurotiales</taxon>
        <taxon>Aspergillaceae</taxon>
        <taxon>Aspergillus</taxon>
        <taxon>Aspergillus subgen. Nidulantes</taxon>
    </lineage>
</organism>
<evidence type="ECO:0000250" key="1">
    <source>
        <dbReference type="UniProtKB" id="L0E2Z4"/>
    </source>
</evidence>
<evidence type="ECO:0000250" key="2">
    <source>
        <dbReference type="UniProtKB" id="O93868"/>
    </source>
</evidence>
<evidence type="ECO:0000250" key="3">
    <source>
        <dbReference type="UniProtKB" id="P9WEP2"/>
    </source>
</evidence>
<evidence type="ECO:0000255" key="4">
    <source>
        <dbReference type="PROSITE-ProRule" id="PRU10001"/>
    </source>
</evidence>
<evidence type="ECO:0000269" key="5">
    <source>
    </source>
</evidence>
<evidence type="ECO:0000269" key="6">
    <source>
    </source>
</evidence>
<evidence type="ECO:0000303" key="7">
    <source>
    </source>
</evidence>
<evidence type="ECO:0000305" key="8"/>
<evidence type="ECO:0000305" key="9">
    <source>
    </source>
</evidence>
<evidence type="ECO:0000305" key="10">
    <source>
    </source>
</evidence>
<protein>
    <recommendedName>
        <fullName evidence="7">Short chain dehydrogenase ausX</fullName>
        <ecNumber evidence="9">1.1.1.-</ecNumber>
    </recommendedName>
    <alternativeName>
        <fullName evidence="7">Austinoid biosynthesis cluster protein X</fullName>
    </alternativeName>
</protein>
<name>AUSX_ASPCI</name>
<comment type="function">
    <text evidence="3 5 6">Short chain dehydrogenase; part of the gene cluster that mediates the biosynthesis of calidodehydroaustin, a fungal meroterpenoid (PubMed:28233494, PubMed:29076725). The first step of the pathway is the synthesis of 3,5-dimethylorsellinic acid by the polyketide synthase ausA (PubMed:28233494). 3,5-dimethylorsellinic acid is then prenylated by the polyprenyl transferase ausN (PubMed:28233494). Further epoxidation by the FAD-dependent monooxygenase ausM and cyclization by the probable terpene cyclase ausL lead to the formation of protoaustinoid A (By similarity). Protoaustinoid A is then oxidized to spiro-lactone preaustinoid A3 by the combined action of the FAD-binding monooxygenases ausB and ausC, and the dioxygenase ausE (By similarity). Acid-catalyzed keto-rearrangement and ring contraction of the tetraketide portion of preaustinoid A3 by ausJ lead to the formation of preaustinoid A4 (By similarity). The aldo-keto reductase ausK, with the help of ausH, is involved in the next step by transforming preaustinoid A4 into isoaustinone which is in turn hydroxylated by the P450 monooxygenase ausI to form austinolide (By similarity). The cytochrome P450 monooxygenase ausG modifies austinolide to austinol (By similarity). Austinol is further acetylated to austin by the O-acetyltransferase ausP, which spontaneously changes to dehydroaustin (PubMed:28233494). The cytochrome P450 monooxygenase ausR then converts dehydroaustin is into 7-dehydrodehydroaustin (PubMed:28233494). The hydroxylation catalyzed by ausR permits the O-acetyltransferase ausQ to add an additional acetyl group to the molecule, leading to the formation of acetoxydehydroaustin (PubMed:28233494). The short chain dehydrogenase ausT catalyzes the reduction of the double bond present between carbon atoms 1 and 2 to convert 7-dehydrodehydroaustin into 1,2-dihydro-7-hydroxydehydroaustin (PubMed:28233494). AusQ catalyzes not only an acetylation reaction but also the addition of the PKS ausV diketide product to 1,2-dihydro-7-hydroxydehydroaustin, forming precalidodehydroaustin (PubMed:28233494). Finally, the iron/alpha-ketoglutarate-dependent dioxygenase converts precalidodehydroaustin into calidodehydroaustin (PubMed:28233494).</text>
</comment>
<comment type="pathway">
    <text evidence="9">Secondary metabolite biosynthesis; terpenoid biosynthesis.</text>
</comment>
<comment type="miscellaneous">
    <text evidence="10">In A.calidoustus, the austinoid gene cluster lies on a contiguous DNA region, while clusters from E.nidulans and P.brasilianum are split in their respective genomes. Genetic rearrangements provoked variability among the clusters and E.nidulans produces the least number of austionoid derivatives with the end products austinol and dehydroaustinol, while P.brasilianum can produce until acetoxydehydroaustin, and A.calidoustus produces the highest number of identified derivatives.</text>
</comment>
<comment type="similarity">
    <text evidence="8">Belongs to the short-chain dehydrogenases/reductases (SDR) family.</text>
</comment>
<proteinExistence type="inferred from homology"/>
<reference key="1">
    <citation type="journal article" date="2016" name="Genome Announc.">
        <title>Draft genome sequences of fungus Aspergillus calidoustus.</title>
        <authorList>
            <person name="Horn F."/>
            <person name="Linde J."/>
            <person name="Mattern D.J."/>
            <person name="Walther G."/>
            <person name="Guthke R."/>
            <person name="Scherlach K."/>
            <person name="Martin K."/>
            <person name="Brakhage A.A."/>
            <person name="Petzke L."/>
            <person name="Valiante V."/>
        </authorList>
    </citation>
    <scope>NUCLEOTIDE SEQUENCE [LARGE SCALE GENOMIC DNA]</scope>
    <source>
        <strain>SF006504</strain>
    </source>
</reference>
<reference key="2">
    <citation type="journal article" date="2017" name="ACS Chem. Biol.">
        <title>Discovery of an Extended Austinoid Biosynthetic Pathway in Aspergillus calidoustus.</title>
        <authorList>
            <person name="Valiante V."/>
            <person name="Mattern D.J."/>
            <person name="Schueffler A."/>
            <person name="Horn F."/>
            <person name="Walther G."/>
            <person name="Scherlach K."/>
            <person name="Petzke L."/>
            <person name="Dickhaut J."/>
            <person name="Guthke R."/>
            <person name="Hertweck C."/>
            <person name="Nett M."/>
            <person name="Thines E."/>
            <person name="Brakhage A.A."/>
        </authorList>
    </citation>
    <scope>FUNCTION</scope>
    <scope>PATHWAY</scope>
</reference>
<reference key="3">
    <citation type="journal article" date="2017" name="ACS Chem. Biol.">
        <title>Rewiring of the austinoid biosynthetic pathway in filamentous fungi.</title>
        <authorList>
            <person name="Mattern D.J."/>
            <person name="Valiante V."/>
            <person name="Horn F."/>
            <person name="Petzke L."/>
            <person name="Brakhage A.A."/>
        </authorList>
    </citation>
    <scope>FUNCTION</scope>
</reference>
<feature type="chain" id="PRO_0000453873" description="Short chain dehydrogenase ausX">
    <location>
        <begin position="1"/>
        <end position="257"/>
    </location>
</feature>
<feature type="active site" description="Proton acceptor" evidence="4">
    <location>
        <position position="151"/>
    </location>
</feature>
<feature type="active site" description="Lowers pKa of active site Tyr" evidence="2">
    <location>
        <position position="155"/>
    </location>
</feature>
<feature type="binding site" evidence="1">
    <location>
        <position position="11"/>
    </location>
    <ligand>
        <name>NADP(+)</name>
        <dbReference type="ChEBI" id="CHEBI:58349"/>
    </ligand>
</feature>
<feature type="binding site" evidence="1">
    <location>
        <position position="57"/>
    </location>
    <ligand>
        <name>NADP(+)</name>
        <dbReference type="ChEBI" id="CHEBI:58349"/>
    </ligand>
</feature>
<feature type="binding site" evidence="1">
    <location>
        <position position="119"/>
    </location>
    <ligand>
        <name>NADP(+)</name>
        <dbReference type="ChEBI" id="CHEBI:58349"/>
    </ligand>
</feature>
<feature type="binding site" evidence="2">
    <location>
        <position position="151"/>
    </location>
    <ligand>
        <name>NADP(+)</name>
        <dbReference type="ChEBI" id="CHEBI:58349"/>
    </ligand>
</feature>
<feature type="binding site" evidence="2">
    <location>
        <position position="155"/>
    </location>
    <ligand>
        <name>NADP(+)</name>
        <dbReference type="ChEBI" id="CHEBI:58349"/>
    </ligand>
</feature>
<feature type="binding site" evidence="2">
    <location>
        <position position="184"/>
    </location>
    <ligand>
        <name>NADP(+)</name>
        <dbReference type="ChEBI" id="CHEBI:58349"/>
    </ligand>
</feature>
<keyword id="KW-0521">NADP</keyword>
<keyword id="KW-0560">Oxidoreductase</keyword>
<keyword id="KW-1185">Reference proteome</keyword>
<accession>A0A0U5GHD4</accession>
<dbReference type="EC" id="1.1.1.-" evidence="9"/>
<dbReference type="EMBL" id="CDMC01000024">
    <property type="protein sequence ID" value="CEL11270.1"/>
    <property type="molecule type" value="Genomic_DNA"/>
</dbReference>
<dbReference type="SMR" id="A0A0U5GHD4"/>
<dbReference type="STRING" id="454130.A0A0U5GHD4"/>
<dbReference type="OMA" id="IPIDNAW"/>
<dbReference type="OrthoDB" id="37659at2759"/>
<dbReference type="UniPathway" id="UPA00213"/>
<dbReference type="Proteomes" id="UP000054771">
    <property type="component" value="Unassembled WGS sequence"/>
</dbReference>
<dbReference type="GO" id="GO:0016491">
    <property type="term" value="F:oxidoreductase activity"/>
    <property type="evidence" value="ECO:0007669"/>
    <property type="project" value="UniProtKB-KW"/>
</dbReference>
<dbReference type="GO" id="GO:0016114">
    <property type="term" value="P:terpenoid biosynthetic process"/>
    <property type="evidence" value="ECO:0007669"/>
    <property type="project" value="UniProtKB-UniPathway"/>
</dbReference>
<dbReference type="CDD" id="cd05233">
    <property type="entry name" value="SDR_c"/>
    <property type="match status" value="1"/>
</dbReference>
<dbReference type="FunFam" id="3.40.50.720:FF:000084">
    <property type="entry name" value="Short-chain dehydrogenase reductase"/>
    <property type="match status" value="1"/>
</dbReference>
<dbReference type="Gene3D" id="3.40.50.720">
    <property type="entry name" value="NAD(P)-binding Rossmann-like Domain"/>
    <property type="match status" value="1"/>
</dbReference>
<dbReference type="InterPro" id="IPR036291">
    <property type="entry name" value="NAD(P)-bd_dom_sf"/>
</dbReference>
<dbReference type="InterPro" id="IPR002347">
    <property type="entry name" value="SDR_fam"/>
</dbReference>
<dbReference type="InterPro" id="IPR051122">
    <property type="entry name" value="SDR_superfamily_enzyme"/>
</dbReference>
<dbReference type="PANTHER" id="PTHR43477">
    <property type="entry name" value="DIHYDROANTICAPSIN 7-DEHYDROGENASE"/>
    <property type="match status" value="1"/>
</dbReference>
<dbReference type="PANTHER" id="PTHR43477:SF1">
    <property type="entry name" value="DIHYDROANTICAPSIN 7-DEHYDROGENASE"/>
    <property type="match status" value="1"/>
</dbReference>
<dbReference type="Pfam" id="PF00106">
    <property type="entry name" value="adh_short"/>
    <property type="match status" value="1"/>
</dbReference>
<dbReference type="PRINTS" id="PR00081">
    <property type="entry name" value="GDHRDH"/>
</dbReference>
<dbReference type="PRINTS" id="PR00080">
    <property type="entry name" value="SDRFAMILY"/>
</dbReference>
<dbReference type="SUPFAM" id="SSF51735">
    <property type="entry name" value="NAD(P)-binding Rossmann-fold domains"/>
    <property type="match status" value="1"/>
</dbReference>
<sequence>MYNLKNQVIVITGSSSGIGLAASTIALSSGAKVFGVDIRPPPSTLTSQSNYACLQYDLSSSSTVSDIVAACEGAFGPRIDGLLNIAGVMDLNQSADTLADEIWERCIAVNLTAPVKLMREVLPVMQRQGGGSIVNVASKAALSGAVSGVAYTASKHGLVGATKNVAWRFKHERIRCNVVCPGGVGATSIRDGVDVTQFDAAALETMALIHQAHGCDREKGVELQPQDIAHMLLFLLDERSRGVSGAVIPVDNAWSTI</sequence>
<gene>
    <name evidence="7" type="primary">ausX</name>
    <name type="ORF">ASPCAL14373</name>
</gene>